<reference key="1">
    <citation type="journal article" date="2003" name="Genome Res.">
        <title>Comparative complete genome sequence analysis of the amino acid replacements responsible for the thermostability of Corynebacterium efficiens.</title>
        <authorList>
            <person name="Nishio Y."/>
            <person name="Nakamura Y."/>
            <person name="Kawarabayasi Y."/>
            <person name="Usuda Y."/>
            <person name="Kimura E."/>
            <person name="Sugimoto S."/>
            <person name="Matsui K."/>
            <person name="Yamagishi A."/>
            <person name="Kikuchi H."/>
            <person name="Ikeo K."/>
            <person name="Gojobori T."/>
        </authorList>
    </citation>
    <scope>NUCLEOTIDE SEQUENCE [LARGE SCALE GENOMIC DNA]</scope>
    <source>
        <strain>DSM 44549 / YS-314 / AJ 12310 / JCM 11189 / NBRC 100395</strain>
    </source>
</reference>
<accession>Q8FTA2</accession>
<dbReference type="EMBL" id="BA000035">
    <property type="protein sequence ID" value="BAC18478.1"/>
    <property type="status" value="ALT_INIT"/>
    <property type="molecule type" value="Genomic_DNA"/>
</dbReference>
<dbReference type="RefSeq" id="WP_006767669.1">
    <property type="nucleotide sequence ID" value="NC_004369.1"/>
</dbReference>
<dbReference type="SMR" id="Q8FTA2"/>
<dbReference type="STRING" id="196164.gene:10742089"/>
<dbReference type="KEGG" id="cef:CE1668"/>
<dbReference type="eggNOG" id="COG3830">
    <property type="taxonomic scope" value="Bacteria"/>
</dbReference>
<dbReference type="HOGENOM" id="CLU_155669_0_1_11"/>
<dbReference type="OrthoDB" id="9803078at2"/>
<dbReference type="Proteomes" id="UP000001409">
    <property type="component" value="Chromosome"/>
</dbReference>
<dbReference type="Gene3D" id="3.30.70.260">
    <property type="match status" value="1"/>
</dbReference>
<dbReference type="HAMAP" id="MF_01054">
    <property type="entry name" value="UPF0237"/>
    <property type="match status" value="1"/>
</dbReference>
<dbReference type="InterPro" id="IPR045865">
    <property type="entry name" value="ACT-like_dom_sf"/>
</dbReference>
<dbReference type="InterPro" id="IPR002912">
    <property type="entry name" value="ACT_dom"/>
</dbReference>
<dbReference type="InterPro" id="IPR050990">
    <property type="entry name" value="UPF0237/GcvR_regulator"/>
</dbReference>
<dbReference type="InterPro" id="IPR022986">
    <property type="entry name" value="UPF0237_ACT"/>
</dbReference>
<dbReference type="NCBIfam" id="NF001220">
    <property type="entry name" value="PRK00194.1"/>
    <property type="match status" value="1"/>
</dbReference>
<dbReference type="PANTHER" id="PTHR34875">
    <property type="entry name" value="UPF0237 PROTEIN MJ1558"/>
    <property type="match status" value="1"/>
</dbReference>
<dbReference type="PANTHER" id="PTHR34875:SF6">
    <property type="entry name" value="UPF0237 PROTEIN MJ1558"/>
    <property type="match status" value="1"/>
</dbReference>
<dbReference type="Pfam" id="PF13740">
    <property type="entry name" value="ACT_6"/>
    <property type="match status" value="1"/>
</dbReference>
<dbReference type="SUPFAM" id="SSF55021">
    <property type="entry name" value="ACT-like"/>
    <property type="match status" value="1"/>
</dbReference>
<dbReference type="PROSITE" id="PS51671">
    <property type="entry name" value="ACT"/>
    <property type="match status" value="1"/>
</dbReference>
<organism>
    <name type="scientific">Corynebacterium efficiens (strain DSM 44549 / YS-314 / AJ 12310 / JCM 11189 / NBRC 100395)</name>
    <dbReference type="NCBI Taxonomy" id="196164"/>
    <lineage>
        <taxon>Bacteria</taxon>
        <taxon>Bacillati</taxon>
        <taxon>Actinomycetota</taxon>
        <taxon>Actinomycetes</taxon>
        <taxon>Mycobacteriales</taxon>
        <taxon>Corynebacteriaceae</taxon>
        <taxon>Corynebacterium</taxon>
    </lineage>
</organism>
<sequence length="89" mass="9763">MFAIMTVTGQDHTGIIAAVSTALAELDVNIHNVSQTIMDKWFTMILHVGFDDAALTIADIQERMTSVEKEQGLVIRIQSEALFSAVNDI</sequence>
<comment type="similarity">
    <text evidence="1">Belongs to the UPF0237 family.</text>
</comment>
<comment type="sequence caution" evidence="2">
    <conflict type="erroneous initiation">
        <sequence resource="EMBL-CDS" id="BAC18478"/>
    </conflict>
</comment>
<keyword id="KW-1185">Reference proteome</keyword>
<proteinExistence type="inferred from homology"/>
<evidence type="ECO:0000255" key="1">
    <source>
        <dbReference type="HAMAP-Rule" id="MF_01054"/>
    </source>
</evidence>
<evidence type="ECO:0000305" key="2"/>
<protein>
    <recommendedName>
        <fullName evidence="1">UPF0237 protein CE1668</fullName>
    </recommendedName>
</protein>
<name>Y1668_COREF</name>
<gene>
    <name type="ordered locus">CE1668</name>
</gene>
<feature type="chain" id="PRO_0000219897" description="UPF0237 protein CE1668">
    <location>
        <begin position="1"/>
        <end position="89"/>
    </location>
</feature>
<feature type="domain" description="ACT" evidence="1">
    <location>
        <begin position="4"/>
        <end position="78"/>
    </location>
</feature>